<proteinExistence type="inferred from homology"/>
<comment type="function">
    <text evidence="1">Master enzyme that delivers sulfur to a number of partners involved in Fe-S cluster assembly, tRNA modification or cofactor biosynthesis. Catalyzes the removal of elemental sulfur atoms from cysteine to produce alanine. Functions as a sulfur delivery protein for Fe-S cluster synthesis onto IscU, an Fe-S scaffold assembly protein, as well as other S acceptor proteins.</text>
</comment>
<comment type="catalytic activity">
    <reaction evidence="1">
        <text>(sulfur carrier)-H + L-cysteine = (sulfur carrier)-SH + L-alanine</text>
        <dbReference type="Rhea" id="RHEA:43892"/>
        <dbReference type="Rhea" id="RHEA-COMP:14737"/>
        <dbReference type="Rhea" id="RHEA-COMP:14739"/>
        <dbReference type="ChEBI" id="CHEBI:29917"/>
        <dbReference type="ChEBI" id="CHEBI:35235"/>
        <dbReference type="ChEBI" id="CHEBI:57972"/>
        <dbReference type="ChEBI" id="CHEBI:64428"/>
        <dbReference type="EC" id="2.8.1.7"/>
    </reaction>
</comment>
<comment type="cofactor">
    <cofactor evidence="1">
        <name>pyridoxal 5'-phosphate</name>
        <dbReference type="ChEBI" id="CHEBI:597326"/>
    </cofactor>
</comment>
<comment type="pathway">
    <text evidence="1">Cofactor biosynthesis; iron-sulfur cluster biosynthesis.</text>
</comment>
<comment type="subunit">
    <text evidence="1">Homodimer. Forms a heterotetramer with IscU, interacts with other sulfur acceptors.</text>
</comment>
<comment type="subcellular location">
    <subcellularLocation>
        <location evidence="1">Cytoplasm</location>
    </subcellularLocation>
</comment>
<comment type="similarity">
    <text evidence="1">Belongs to the class-V pyridoxal-phosphate-dependent aminotransferase family. NifS/IscS subfamily.</text>
</comment>
<accession>A6TCF1</accession>
<organism>
    <name type="scientific">Klebsiella pneumoniae subsp. pneumoniae (strain ATCC 700721 / MGH 78578)</name>
    <dbReference type="NCBI Taxonomy" id="272620"/>
    <lineage>
        <taxon>Bacteria</taxon>
        <taxon>Pseudomonadati</taxon>
        <taxon>Pseudomonadota</taxon>
        <taxon>Gammaproteobacteria</taxon>
        <taxon>Enterobacterales</taxon>
        <taxon>Enterobacteriaceae</taxon>
        <taxon>Klebsiella/Raoultella group</taxon>
        <taxon>Klebsiella</taxon>
        <taxon>Klebsiella pneumoniae complex</taxon>
    </lineage>
</organism>
<name>ISCS_KLEP7</name>
<evidence type="ECO:0000255" key="1">
    <source>
        <dbReference type="HAMAP-Rule" id="MF_00331"/>
    </source>
</evidence>
<dbReference type="EC" id="2.8.1.7" evidence="1"/>
<dbReference type="EMBL" id="CP000647">
    <property type="protein sequence ID" value="ABR78272.1"/>
    <property type="molecule type" value="Genomic_DNA"/>
</dbReference>
<dbReference type="RefSeq" id="WP_002913992.1">
    <property type="nucleotide sequence ID" value="NC_009648.1"/>
</dbReference>
<dbReference type="SMR" id="A6TCF1"/>
<dbReference type="STRING" id="272620.KPN_02862"/>
<dbReference type="jPOST" id="A6TCF1"/>
<dbReference type="PaxDb" id="272620-KPN_02862"/>
<dbReference type="EnsemblBacteria" id="ABR78272">
    <property type="protein sequence ID" value="ABR78272"/>
    <property type="gene ID" value="KPN_02862"/>
</dbReference>
<dbReference type="GeneID" id="69754040"/>
<dbReference type="KEGG" id="kpn:KPN_02862"/>
<dbReference type="HOGENOM" id="CLU_003433_0_2_6"/>
<dbReference type="UniPathway" id="UPA00266"/>
<dbReference type="Proteomes" id="UP000000265">
    <property type="component" value="Chromosome"/>
</dbReference>
<dbReference type="GO" id="GO:1990221">
    <property type="term" value="C:L-cysteine desulfurase complex"/>
    <property type="evidence" value="ECO:0007669"/>
    <property type="project" value="UniProtKB-ARBA"/>
</dbReference>
<dbReference type="GO" id="GO:0051537">
    <property type="term" value="F:2 iron, 2 sulfur cluster binding"/>
    <property type="evidence" value="ECO:0007669"/>
    <property type="project" value="UniProtKB-UniRule"/>
</dbReference>
<dbReference type="GO" id="GO:0031071">
    <property type="term" value="F:cysteine desulfurase activity"/>
    <property type="evidence" value="ECO:0007669"/>
    <property type="project" value="UniProtKB-UniRule"/>
</dbReference>
<dbReference type="GO" id="GO:0046872">
    <property type="term" value="F:metal ion binding"/>
    <property type="evidence" value="ECO:0007669"/>
    <property type="project" value="UniProtKB-KW"/>
</dbReference>
<dbReference type="GO" id="GO:0030170">
    <property type="term" value="F:pyridoxal phosphate binding"/>
    <property type="evidence" value="ECO:0007669"/>
    <property type="project" value="UniProtKB-UniRule"/>
</dbReference>
<dbReference type="GO" id="GO:0044571">
    <property type="term" value="P:[2Fe-2S] cluster assembly"/>
    <property type="evidence" value="ECO:0007669"/>
    <property type="project" value="UniProtKB-UniRule"/>
</dbReference>
<dbReference type="FunFam" id="3.40.640.10:FF:000003">
    <property type="entry name" value="Cysteine desulfurase IscS"/>
    <property type="match status" value="1"/>
</dbReference>
<dbReference type="FunFam" id="3.90.1150.10:FF:000002">
    <property type="entry name" value="Cysteine desulfurase IscS"/>
    <property type="match status" value="1"/>
</dbReference>
<dbReference type="Gene3D" id="3.90.1150.10">
    <property type="entry name" value="Aspartate Aminotransferase, domain 1"/>
    <property type="match status" value="1"/>
</dbReference>
<dbReference type="Gene3D" id="3.40.640.10">
    <property type="entry name" value="Type I PLP-dependent aspartate aminotransferase-like (Major domain)"/>
    <property type="match status" value="1"/>
</dbReference>
<dbReference type="HAMAP" id="MF_00331">
    <property type="entry name" value="Cys_desulf_IscS"/>
    <property type="match status" value="1"/>
</dbReference>
<dbReference type="InterPro" id="IPR000192">
    <property type="entry name" value="Aminotrans_V_dom"/>
</dbReference>
<dbReference type="InterPro" id="IPR020578">
    <property type="entry name" value="Aminotrans_V_PyrdxlP_BS"/>
</dbReference>
<dbReference type="InterPro" id="IPR010240">
    <property type="entry name" value="Cys_deSase_IscS"/>
</dbReference>
<dbReference type="InterPro" id="IPR016454">
    <property type="entry name" value="Cysteine_dSase"/>
</dbReference>
<dbReference type="InterPro" id="IPR015424">
    <property type="entry name" value="PyrdxlP-dep_Trfase"/>
</dbReference>
<dbReference type="InterPro" id="IPR015421">
    <property type="entry name" value="PyrdxlP-dep_Trfase_major"/>
</dbReference>
<dbReference type="InterPro" id="IPR015422">
    <property type="entry name" value="PyrdxlP-dep_Trfase_small"/>
</dbReference>
<dbReference type="NCBIfam" id="TIGR02006">
    <property type="entry name" value="IscS"/>
    <property type="match status" value="1"/>
</dbReference>
<dbReference type="NCBIfam" id="NF002806">
    <property type="entry name" value="PRK02948.1"/>
    <property type="match status" value="1"/>
</dbReference>
<dbReference type="NCBIfam" id="NF010611">
    <property type="entry name" value="PRK14012.1"/>
    <property type="match status" value="1"/>
</dbReference>
<dbReference type="PANTHER" id="PTHR11601:SF34">
    <property type="entry name" value="CYSTEINE DESULFURASE"/>
    <property type="match status" value="1"/>
</dbReference>
<dbReference type="PANTHER" id="PTHR11601">
    <property type="entry name" value="CYSTEINE DESULFURYLASE FAMILY MEMBER"/>
    <property type="match status" value="1"/>
</dbReference>
<dbReference type="Pfam" id="PF00266">
    <property type="entry name" value="Aminotran_5"/>
    <property type="match status" value="1"/>
</dbReference>
<dbReference type="PIRSF" id="PIRSF005572">
    <property type="entry name" value="NifS"/>
    <property type="match status" value="1"/>
</dbReference>
<dbReference type="SUPFAM" id="SSF53383">
    <property type="entry name" value="PLP-dependent transferases"/>
    <property type="match status" value="1"/>
</dbReference>
<dbReference type="PROSITE" id="PS00595">
    <property type="entry name" value="AA_TRANSFER_CLASS_5"/>
    <property type="match status" value="1"/>
</dbReference>
<protein>
    <recommendedName>
        <fullName evidence="1">Cysteine desulfurase IscS</fullName>
        <ecNumber evidence="1">2.8.1.7</ecNumber>
    </recommendedName>
</protein>
<gene>
    <name evidence="1" type="primary">iscS</name>
    <name type="ordered locus">KPN78578_28110</name>
    <name type="ORF">KPN_02862</name>
</gene>
<reference key="1">
    <citation type="submission" date="2006-09" db="EMBL/GenBank/DDBJ databases">
        <authorList>
            <consortium name="The Klebsiella pneumonia Genome Sequencing Project"/>
            <person name="McClelland M."/>
            <person name="Sanderson E.K."/>
            <person name="Spieth J."/>
            <person name="Clifton W.S."/>
            <person name="Latreille P."/>
            <person name="Sabo A."/>
            <person name="Pepin K."/>
            <person name="Bhonagiri V."/>
            <person name="Porwollik S."/>
            <person name="Ali J."/>
            <person name="Wilson R.K."/>
        </authorList>
    </citation>
    <scope>NUCLEOTIDE SEQUENCE [LARGE SCALE GENOMIC DNA]</scope>
    <source>
        <strain>ATCC 700721 / MGH 78578</strain>
    </source>
</reference>
<keyword id="KW-0001">2Fe-2S</keyword>
<keyword id="KW-0963">Cytoplasm</keyword>
<keyword id="KW-0408">Iron</keyword>
<keyword id="KW-0411">Iron-sulfur</keyword>
<keyword id="KW-0479">Metal-binding</keyword>
<keyword id="KW-0663">Pyridoxal phosphate</keyword>
<keyword id="KW-0808">Transferase</keyword>
<feature type="chain" id="PRO_1000019414" description="Cysteine desulfurase IscS">
    <location>
        <begin position="1"/>
        <end position="404"/>
    </location>
</feature>
<feature type="active site" description="Cysteine persulfide intermediate" evidence="1">
    <location>
        <position position="328"/>
    </location>
</feature>
<feature type="binding site" evidence="1">
    <location>
        <begin position="75"/>
        <end position="76"/>
    </location>
    <ligand>
        <name>pyridoxal 5'-phosphate</name>
        <dbReference type="ChEBI" id="CHEBI:597326"/>
    </ligand>
</feature>
<feature type="binding site" evidence="1">
    <location>
        <position position="155"/>
    </location>
    <ligand>
        <name>pyridoxal 5'-phosphate</name>
        <dbReference type="ChEBI" id="CHEBI:597326"/>
    </ligand>
</feature>
<feature type="binding site" evidence="1">
    <location>
        <position position="183"/>
    </location>
    <ligand>
        <name>pyridoxal 5'-phosphate</name>
        <dbReference type="ChEBI" id="CHEBI:597326"/>
    </ligand>
</feature>
<feature type="binding site" evidence="1">
    <location>
        <begin position="203"/>
        <end position="205"/>
    </location>
    <ligand>
        <name>pyridoxal 5'-phosphate</name>
        <dbReference type="ChEBI" id="CHEBI:597326"/>
    </ligand>
</feature>
<feature type="binding site" evidence="1">
    <location>
        <position position="243"/>
    </location>
    <ligand>
        <name>pyridoxal 5'-phosphate</name>
        <dbReference type="ChEBI" id="CHEBI:597326"/>
    </ligand>
</feature>
<feature type="binding site" description="via persulfide group" evidence="1">
    <location>
        <position position="328"/>
    </location>
    <ligand>
        <name>[2Fe-2S] cluster</name>
        <dbReference type="ChEBI" id="CHEBI:190135"/>
        <note>ligand shared with IscU</note>
    </ligand>
</feature>
<feature type="modified residue" description="N6-(pyridoxal phosphate)lysine" evidence="1">
    <location>
        <position position="206"/>
    </location>
</feature>
<sequence length="404" mass="45056">MKLPIYLDYSATTPVDPRVAEKMMQFLTMDGTFGNPASRSHRFGWQAEEAVDIARNQIAELVGADPREIVFTSGATESDNLAIKGAANFYQKKGKHIITSKTEHKAVLDTCRQLEREGFEVTYLAPQSNGIIDLKELEAAMRDDTILVSIMHVNNEIGVVQDIATIGEMCRARGIIYHVDATQSVGKLPIDLSQLKVDLMSFSGHKIYGPKGIGALYVRRKPRIRIEAQIHGGGHERGMRSGTLPVHQIVGMGEAYRIAKEEMESEMARLRTLRNRLWNGVKDMEEVYLNGDLEQGAPNILNVSFNYVEGESLIMALKDLAVSSGSACTSASLEPSYVLRALGMTDELAHSSIRFSLGRFTTEEEIDYAIDLIRKSIGRLRELSPLWEMFKQGVDLNSIEWSHH</sequence>